<proteinExistence type="inferred from homology"/>
<feature type="chain" id="PRO_1000003352" description="3-deoxy-manno-octulosonate cytidylyltransferase">
    <location>
        <begin position="1"/>
        <end position="253"/>
    </location>
</feature>
<dbReference type="EC" id="2.7.7.38" evidence="1"/>
<dbReference type="EMBL" id="CP000462">
    <property type="protein sequence ID" value="ABK37248.1"/>
    <property type="molecule type" value="Genomic_DNA"/>
</dbReference>
<dbReference type="RefSeq" id="WP_011706580.1">
    <property type="nucleotide sequence ID" value="NC_008570.1"/>
</dbReference>
<dbReference type="RefSeq" id="YP_857280.1">
    <property type="nucleotide sequence ID" value="NC_008570.1"/>
</dbReference>
<dbReference type="SMR" id="A0KLX9"/>
<dbReference type="STRING" id="380703.AHA_2775"/>
<dbReference type="EnsemblBacteria" id="ABK37248">
    <property type="protein sequence ID" value="ABK37248"/>
    <property type="gene ID" value="AHA_2775"/>
</dbReference>
<dbReference type="GeneID" id="4487312"/>
<dbReference type="KEGG" id="aha:AHA_2775"/>
<dbReference type="PATRIC" id="fig|380703.7.peg.2783"/>
<dbReference type="eggNOG" id="COG1212">
    <property type="taxonomic scope" value="Bacteria"/>
</dbReference>
<dbReference type="HOGENOM" id="CLU_065038_1_0_6"/>
<dbReference type="OrthoDB" id="9815559at2"/>
<dbReference type="UniPathway" id="UPA00030"/>
<dbReference type="UniPathway" id="UPA00358">
    <property type="reaction ID" value="UER00476"/>
</dbReference>
<dbReference type="Proteomes" id="UP000000756">
    <property type="component" value="Chromosome"/>
</dbReference>
<dbReference type="GO" id="GO:0005829">
    <property type="term" value="C:cytosol"/>
    <property type="evidence" value="ECO:0007669"/>
    <property type="project" value="TreeGrafter"/>
</dbReference>
<dbReference type="GO" id="GO:0008690">
    <property type="term" value="F:3-deoxy-manno-octulosonate cytidylyltransferase activity"/>
    <property type="evidence" value="ECO:0007669"/>
    <property type="project" value="UniProtKB-UniRule"/>
</dbReference>
<dbReference type="GO" id="GO:0033468">
    <property type="term" value="P:CMP-keto-3-deoxy-D-manno-octulosonic acid biosynthetic process"/>
    <property type="evidence" value="ECO:0007669"/>
    <property type="project" value="UniProtKB-UniRule"/>
</dbReference>
<dbReference type="GO" id="GO:0009103">
    <property type="term" value="P:lipopolysaccharide biosynthetic process"/>
    <property type="evidence" value="ECO:0007669"/>
    <property type="project" value="UniProtKB-UniRule"/>
</dbReference>
<dbReference type="CDD" id="cd02517">
    <property type="entry name" value="CMP-KDO-Synthetase"/>
    <property type="match status" value="1"/>
</dbReference>
<dbReference type="FunFam" id="3.90.550.10:FF:000011">
    <property type="entry name" value="3-deoxy-manno-octulosonate cytidylyltransferase"/>
    <property type="match status" value="1"/>
</dbReference>
<dbReference type="Gene3D" id="3.90.550.10">
    <property type="entry name" value="Spore Coat Polysaccharide Biosynthesis Protein SpsA, Chain A"/>
    <property type="match status" value="1"/>
</dbReference>
<dbReference type="HAMAP" id="MF_00057">
    <property type="entry name" value="KdsB"/>
    <property type="match status" value="1"/>
</dbReference>
<dbReference type="InterPro" id="IPR003329">
    <property type="entry name" value="Cytidylyl_trans"/>
</dbReference>
<dbReference type="InterPro" id="IPR004528">
    <property type="entry name" value="KdsB"/>
</dbReference>
<dbReference type="InterPro" id="IPR029044">
    <property type="entry name" value="Nucleotide-diphossugar_trans"/>
</dbReference>
<dbReference type="NCBIfam" id="TIGR00466">
    <property type="entry name" value="kdsB"/>
    <property type="match status" value="1"/>
</dbReference>
<dbReference type="NCBIfam" id="NF003950">
    <property type="entry name" value="PRK05450.1-3"/>
    <property type="match status" value="1"/>
</dbReference>
<dbReference type="NCBIfam" id="NF003952">
    <property type="entry name" value="PRK05450.1-5"/>
    <property type="match status" value="1"/>
</dbReference>
<dbReference type="NCBIfam" id="NF009905">
    <property type="entry name" value="PRK13368.1"/>
    <property type="match status" value="1"/>
</dbReference>
<dbReference type="PANTHER" id="PTHR42866">
    <property type="entry name" value="3-DEOXY-MANNO-OCTULOSONATE CYTIDYLYLTRANSFERASE"/>
    <property type="match status" value="1"/>
</dbReference>
<dbReference type="PANTHER" id="PTHR42866:SF2">
    <property type="entry name" value="3-DEOXY-MANNO-OCTULOSONATE CYTIDYLYLTRANSFERASE, MITOCHONDRIAL"/>
    <property type="match status" value="1"/>
</dbReference>
<dbReference type="Pfam" id="PF02348">
    <property type="entry name" value="CTP_transf_3"/>
    <property type="match status" value="1"/>
</dbReference>
<dbReference type="SUPFAM" id="SSF53448">
    <property type="entry name" value="Nucleotide-diphospho-sugar transferases"/>
    <property type="match status" value="1"/>
</dbReference>
<organism>
    <name type="scientific">Aeromonas hydrophila subsp. hydrophila (strain ATCC 7966 / DSM 30187 / BCRC 13018 / CCUG 14551 / JCM 1027 / KCTC 2358 / NCIMB 9240 / NCTC 8049)</name>
    <dbReference type="NCBI Taxonomy" id="380703"/>
    <lineage>
        <taxon>Bacteria</taxon>
        <taxon>Pseudomonadati</taxon>
        <taxon>Pseudomonadota</taxon>
        <taxon>Gammaproteobacteria</taxon>
        <taxon>Aeromonadales</taxon>
        <taxon>Aeromonadaceae</taxon>
        <taxon>Aeromonas</taxon>
    </lineage>
</organism>
<evidence type="ECO:0000255" key="1">
    <source>
        <dbReference type="HAMAP-Rule" id="MF_00057"/>
    </source>
</evidence>
<reference key="1">
    <citation type="journal article" date="2006" name="J. Bacteriol.">
        <title>Genome sequence of Aeromonas hydrophila ATCC 7966T: jack of all trades.</title>
        <authorList>
            <person name="Seshadri R."/>
            <person name="Joseph S.W."/>
            <person name="Chopra A.K."/>
            <person name="Sha J."/>
            <person name="Shaw J."/>
            <person name="Graf J."/>
            <person name="Haft D.H."/>
            <person name="Wu M."/>
            <person name="Ren Q."/>
            <person name="Rosovitz M.J."/>
            <person name="Madupu R."/>
            <person name="Tallon L."/>
            <person name="Kim M."/>
            <person name="Jin S."/>
            <person name="Vuong H."/>
            <person name="Stine O.C."/>
            <person name="Ali A."/>
            <person name="Horneman A.J."/>
            <person name="Heidelberg J.F."/>
        </authorList>
    </citation>
    <scope>NUCLEOTIDE SEQUENCE [LARGE SCALE GENOMIC DNA]</scope>
    <source>
        <strain>ATCC 7966 / DSM 30187 / BCRC 13018 / CCUG 14551 / JCM 1027 / KCTC 2358 / NCIMB 9240 / NCTC 8049</strain>
    </source>
</reference>
<sequence length="253" mass="27775">MSFVVVIPARYASTRLPGKPLADIHGKPMVQHVVEKALQSGADRVIVATDDERVQQALAACAGQAGFEVCMTSKDHQSGTERLAEVCRHYGFAADTIVVNVQGDEPLIPPVIIRQVADNLAAATAPMATLSVPIQDAEEVFNPNAVKVVTDQEGYALYFSRASIPWDRDRFAASREQIGDHYQRHIGIYAYRAGFIQRYVDWAPSALEQIEALEQLRVLWYGEKIHVAQALEAPPVGVDTQADLDKVRALLAN</sequence>
<gene>
    <name evidence="1" type="primary">kdsB</name>
    <name type="ordered locus">AHA_2775</name>
</gene>
<protein>
    <recommendedName>
        <fullName evidence="1">3-deoxy-manno-octulosonate cytidylyltransferase</fullName>
        <ecNumber evidence="1">2.7.7.38</ecNumber>
    </recommendedName>
    <alternativeName>
        <fullName evidence="1">CMP-2-keto-3-deoxyoctulosonic acid synthase</fullName>
        <shortName evidence="1">CKS</shortName>
        <shortName evidence="1">CMP-KDO synthase</shortName>
    </alternativeName>
</protein>
<comment type="function">
    <text evidence="1">Activates KDO (a required 8-carbon sugar) for incorporation into bacterial lipopolysaccharide in Gram-negative bacteria.</text>
</comment>
<comment type="catalytic activity">
    <reaction evidence="1">
        <text>3-deoxy-alpha-D-manno-oct-2-ulosonate + CTP = CMP-3-deoxy-beta-D-manno-octulosonate + diphosphate</text>
        <dbReference type="Rhea" id="RHEA:23448"/>
        <dbReference type="ChEBI" id="CHEBI:33019"/>
        <dbReference type="ChEBI" id="CHEBI:37563"/>
        <dbReference type="ChEBI" id="CHEBI:85986"/>
        <dbReference type="ChEBI" id="CHEBI:85987"/>
        <dbReference type="EC" id="2.7.7.38"/>
    </reaction>
</comment>
<comment type="pathway">
    <text evidence="1">Nucleotide-sugar biosynthesis; CMP-3-deoxy-D-manno-octulosonate biosynthesis; CMP-3-deoxy-D-manno-octulosonate from 3-deoxy-D-manno-octulosonate and CTP: step 1/1.</text>
</comment>
<comment type="pathway">
    <text evidence="1">Bacterial outer membrane biogenesis; lipopolysaccharide biosynthesis.</text>
</comment>
<comment type="subcellular location">
    <subcellularLocation>
        <location evidence="1">Cytoplasm</location>
    </subcellularLocation>
</comment>
<comment type="similarity">
    <text evidence="1">Belongs to the KdsB family.</text>
</comment>
<accession>A0KLX9</accession>
<keyword id="KW-0963">Cytoplasm</keyword>
<keyword id="KW-0448">Lipopolysaccharide biosynthesis</keyword>
<keyword id="KW-0548">Nucleotidyltransferase</keyword>
<keyword id="KW-1185">Reference proteome</keyword>
<keyword id="KW-0808">Transferase</keyword>
<name>KDSB_AERHH</name>